<feature type="chain" id="PRO_0000210603" description="Uncharacterized protein MG422 homolog">
    <location>
        <begin position="1"/>
        <end position="839"/>
    </location>
</feature>
<accession>P75175</accession>
<name>Y620_MYCPN</name>
<keyword id="KW-1185">Reference proteome</keyword>
<dbReference type="EMBL" id="U00089">
    <property type="protein sequence ID" value="AAB95870.1"/>
    <property type="molecule type" value="Genomic_DNA"/>
</dbReference>
<dbReference type="PIR" id="S73548">
    <property type="entry name" value="S73548"/>
</dbReference>
<dbReference type="RefSeq" id="NP_110309.1">
    <property type="nucleotide sequence ID" value="NC_000912.1"/>
</dbReference>
<dbReference type="RefSeq" id="WP_010874977.1">
    <property type="nucleotide sequence ID" value="NZ_OU342337.1"/>
</dbReference>
<dbReference type="STRING" id="272634.MPN_620"/>
<dbReference type="EnsemblBacteria" id="AAB95870">
    <property type="protein sequence ID" value="AAB95870"/>
    <property type="gene ID" value="MPN_620"/>
</dbReference>
<dbReference type="KEGG" id="mpn:MPN_620"/>
<dbReference type="PATRIC" id="fig|272634.6.peg.684"/>
<dbReference type="HOGENOM" id="CLU_338843_0_0_14"/>
<dbReference type="OrthoDB" id="9968103at2"/>
<dbReference type="BioCyc" id="MPNE272634:G1GJ3-1000-MONOMER"/>
<dbReference type="Proteomes" id="UP000000808">
    <property type="component" value="Chromosome"/>
</dbReference>
<gene>
    <name type="ordered locus">MPN_620</name>
    <name type="ORF">C12_orf839</name>
    <name type="ORF">MP222</name>
</gene>
<organism>
    <name type="scientific">Mycoplasma pneumoniae (strain ATCC 29342 / M129 / Subtype 1)</name>
    <name type="common">Mycoplasmoides pneumoniae</name>
    <dbReference type="NCBI Taxonomy" id="272634"/>
    <lineage>
        <taxon>Bacteria</taxon>
        <taxon>Bacillati</taxon>
        <taxon>Mycoplasmatota</taxon>
        <taxon>Mycoplasmoidales</taxon>
        <taxon>Mycoplasmoidaceae</taxon>
        <taxon>Mycoplasmoides</taxon>
    </lineage>
</organism>
<proteinExistence type="predicted"/>
<protein>
    <recommendedName>
        <fullName>Uncharacterized protein MG422 homolog</fullName>
    </recommendedName>
</protein>
<sequence length="839" mass="99913">MLKQISTTTKKEPWVNLSLLMVHNSFLDINYFWTTNLSIHKYGNYLVNNLNKAQWNTLSSVLQLKKAPHSGFLWTDQHNYIPLHRVKTNLCEKIELAAVQQSHPFHQTIHDFLRQSTCPKKRQRLIEKLQIPNELRWFLGFNALKKLSQFVVFELDNTNKLTSETLSQFFTTKFVNKVYFNQIQFEYNNFVGLLEDHERDLVEFSTHFFNSFFEQPDHLTKSFFEQYYALTRQRERLLHNLKVQSYETKHGVNTYFENLQITRAQQQANQLKRAFKKQQRNSVQLINRFMSSLWWSQTKIKFKSIFNFYKTRILEKRIVAKRIQIKIWLLKELKQMRLLNPDLLVSTIAESERLVEQLMSNIQRLYQQILQLKPGQSLNWKYQAISFELEKLTKPIVLTHDAVIGFLIKSRLAFLQEYAKGLNRCEQHNKLVNELKQNVLLNQNQYKGEVSQSYSVVNQKAVFKGFIQTVKAALNYTKLKHTLDPFNLMNIVQERCFEQLLTTYEKLDWTKYELNQLYFVCRALWTNLHKQTQHFFTKYQFITHGVVDFVFNQGRNQTQFASLKANLNRDWNSPKWKLLVNKTVNKYFEANLHHPQAYLLLPNRNATTLTEANTTTINQLNLKTQLKQWRAHYHLLLQDIRLIQWLYKKEIKQKQQQIKALLKNYGTLNKLLNTQISKVNNVVRKTFFVDSEECDLNRLQASNKLHFNLLNAMVNVISFCLKKCRQNPKKLNRTANLKMLLDNTFKNGIPSWMIFSDLNKINTKQRFKLYLLFKLLLHPQLVLVDSFVNFNKHTYNFTRGLLIAHQNQQGIAYLFNDPHNNLVKDFFTQTINFETRAKN</sequence>
<reference key="1">
    <citation type="journal article" date="1996" name="Nucleic Acids Res.">
        <title>Complete sequence analysis of the genome of the bacterium Mycoplasma pneumoniae.</title>
        <authorList>
            <person name="Himmelreich R."/>
            <person name="Hilbert H."/>
            <person name="Plagens H."/>
            <person name="Pirkl E."/>
            <person name="Li B.-C."/>
            <person name="Herrmann R."/>
        </authorList>
    </citation>
    <scope>NUCLEOTIDE SEQUENCE [LARGE SCALE GENOMIC DNA]</scope>
    <source>
        <strain>ATCC 29342 / M129 / Subtype 1</strain>
    </source>
</reference>